<protein>
    <recommendedName>
        <fullName evidence="1">GTPase Obg</fullName>
        <ecNumber evidence="1">3.6.5.-</ecNumber>
    </recommendedName>
    <alternativeName>
        <fullName evidence="1">GTP-binding protein Obg</fullName>
    </alternativeName>
</protein>
<dbReference type="EC" id="3.6.5.-" evidence="1"/>
<dbReference type="EMBL" id="CP000514">
    <property type="protein sequence ID" value="ABM17953.1"/>
    <property type="molecule type" value="Genomic_DNA"/>
</dbReference>
<dbReference type="SMR" id="A1TYY4"/>
<dbReference type="STRING" id="351348.Maqu_0857"/>
<dbReference type="KEGG" id="maq:Maqu_0857"/>
<dbReference type="eggNOG" id="COG0536">
    <property type="taxonomic scope" value="Bacteria"/>
</dbReference>
<dbReference type="HOGENOM" id="CLU_011747_2_0_6"/>
<dbReference type="OrthoDB" id="9807318at2"/>
<dbReference type="Proteomes" id="UP000000998">
    <property type="component" value="Chromosome"/>
</dbReference>
<dbReference type="GO" id="GO:0005737">
    <property type="term" value="C:cytoplasm"/>
    <property type="evidence" value="ECO:0007669"/>
    <property type="project" value="UniProtKB-SubCell"/>
</dbReference>
<dbReference type="GO" id="GO:0005525">
    <property type="term" value="F:GTP binding"/>
    <property type="evidence" value="ECO:0007669"/>
    <property type="project" value="UniProtKB-UniRule"/>
</dbReference>
<dbReference type="GO" id="GO:0003924">
    <property type="term" value="F:GTPase activity"/>
    <property type="evidence" value="ECO:0007669"/>
    <property type="project" value="UniProtKB-UniRule"/>
</dbReference>
<dbReference type="GO" id="GO:0000287">
    <property type="term" value="F:magnesium ion binding"/>
    <property type="evidence" value="ECO:0007669"/>
    <property type="project" value="InterPro"/>
</dbReference>
<dbReference type="GO" id="GO:0042254">
    <property type="term" value="P:ribosome biogenesis"/>
    <property type="evidence" value="ECO:0007669"/>
    <property type="project" value="UniProtKB-UniRule"/>
</dbReference>
<dbReference type="CDD" id="cd01898">
    <property type="entry name" value="Obg"/>
    <property type="match status" value="1"/>
</dbReference>
<dbReference type="FunFam" id="2.70.210.12:FF:000001">
    <property type="entry name" value="GTPase Obg"/>
    <property type="match status" value="1"/>
</dbReference>
<dbReference type="Gene3D" id="2.70.210.12">
    <property type="entry name" value="GTP1/OBG domain"/>
    <property type="match status" value="1"/>
</dbReference>
<dbReference type="Gene3D" id="3.40.50.300">
    <property type="entry name" value="P-loop containing nucleotide triphosphate hydrolases"/>
    <property type="match status" value="1"/>
</dbReference>
<dbReference type="HAMAP" id="MF_01454">
    <property type="entry name" value="GTPase_Obg"/>
    <property type="match status" value="1"/>
</dbReference>
<dbReference type="InterPro" id="IPR031167">
    <property type="entry name" value="G_OBG"/>
</dbReference>
<dbReference type="InterPro" id="IPR006073">
    <property type="entry name" value="GTP-bd"/>
</dbReference>
<dbReference type="InterPro" id="IPR014100">
    <property type="entry name" value="GTP-bd_Obg/CgtA"/>
</dbReference>
<dbReference type="InterPro" id="IPR006074">
    <property type="entry name" value="GTP1-OBG_CS"/>
</dbReference>
<dbReference type="InterPro" id="IPR006169">
    <property type="entry name" value="GTP1_OBG_dom"/>
</dbReference>
<dbReference type="InterPro" id="IPR036726">
    <property type="entry name" value="GTP1_OBG_dom_sf"/>
</dbReference>
<dbReference type="InterPro" id="IPR045086">
    <property type="entry name" value="OBG_GTPase"/>
</dbReference>
<dbReference type="InterPro" id="IPR027417">
    <property type="entry name" value="P-loop_NTPase"/>
</dbReference>
<dbReference type="NCBIfam" id="TIGR02729">
    <property type="entry name" value="Obg_CgtA"/>
    <property type="match status" value="1"/>
</dbReference>
<dbReference type="NCBIfam" id="NF008955">
    <property type="entry name" value="PRK12297.1"/>
    <property type="match status" value="1"/>
</dbReference>
<dbReference type="NCBIfam" id="NF008956">
    <property type="entry name" value="PRK12299.1"/>
    <property type="match status" value="1"/>
</dbReference>
<dbReference type="PANTHER" id="PTHR11702">
    <property type="entry name" value="DEVELOPMENTALLY REGULATED GTP-BINDING PROTEIN-RELATED"/>
    <property type="match status" value="1"/>
</dbReference>
<dbReference type="PANTHER" id="PTHR11702:SF31">
    <property type="entry name" value="MITOCHONDRIAL RIBOSOME-ASSOCIATED GTPASE 2"/>
    <property type="match status" value="1"/>
</dbReference>
<dbReference type="Pfam" id="PF01018">
    <property type="entry name" value="GTP1_OBG"/>
    <property type="match status" value="1"/>
</dbReference>
<dbReference type="Pfam" id="PF01926">
    <property type="entry name" value="MMR_HSR1"/>
    <property type="match status" value="1"/>
</dbReference>
<dbReference type="PIRSF" id="PIRSF002401">
    <property type="entry name" value="GTP_bd_Obg/CgtA"/>
    <property type="match status" value="1"/>
</dbReference>
<dbReference type="PRINTS" id="PR00326">
    <property type="entry name" value="GTP1OBG"/>
</dbReference>
<dbReference type="SUPFAM" id="SSF82051">
    <property type="entry name" value="Obg GTP-binding protein N-terminal domain"/>
    <property type="match status" value="1"/>
</dbReference>
<dbReference type="SUPFAM" id="SSF52540">
    <property type="entry name" value="P-loop containing nucleoside triphosphate hydrolases"/>
    <property type="match status" value="1"/>
</dbReference>
<dbReference type="PROSITE" id="PS51710">
    <property type="entry name" value="G_OBG"/>
    <property type="match status" value="1"/>
</dbReference>
<dbReference type="PROSITE" id="PS00905">
    <property type="entry name" value="GTP1_OBG"/>
    <property type="match status" value="1"/>
</dbReference>
<dbReference type="PROSITE" id="PS51883">
    <property type="entry name" value="OBG"/>
    <property type="match status" value="1"/>
</dbReference>
<evidence type="ECO:0000255" key="1">
    <source>
        <dbReference type="HAMAP-Rule" id="MF_01454"/>
    </source>
</evidence>
<evidence type="ECO:0000255" key="2">
    <source>
        <dbReference type="PROSITE-ProRule" id="PRU01231"/>
    </source>
</evidence>
<evidence type="ECO:0000256" key="3">
    <source>
        <dbReference type="SAM" id="MobiDB-lite"/>
    </source>
</evidence>
<keyword id="KW-0963">Cytoplasm</keyword>
<keyword id="KW-0342">GTP-binding</keyword>
<keyword id="KW-0378">Hydrolase</keyword>
<keyword id="KW-0460">Magnesium</keyword>
<keyword id="KW-0479">Metal-binding</keyword>
<keyword id="KW-0547">Nucleotide-binding</keyword>
<proteinExistence type="inferred from homology"/>
<sequence>MKFVDEATIIVEAGKGGHGCLSFRREKYVPKGGPDGGDGGDGGSVYLEADSALNTLIDYRFQRKYKAQNGEPGAGRNCTGTKGEDLVLPVPVGTTVVDMDTHEVLGDLTKEGQRLKVAQGGFHGLGNTRFKSSVNRAPRQTSKGSEGEARNLRLELKVLADVGLLGLPNAGKSTFIRSVSAARPKVADYPFTTLVPNLGVVSVQAHQSFVIADIPGLIEGAAEGAGLGIRFLKHLVRTRLLLHLVDVAPYDGSSPADAVRAIAHELEKFSETLASRPRWLVLNKVDMVAEEDREAHCQAIVDELGWEGPVFRISALSGEGTKPLVQAVMRWIEEQAEQEADNPDFAEQEAARRRRMDEEARQKIEADRQARRAARNADDDDDFDDDDYDVEVVYAPE</sequence>
<organism>
    <name type="scientific">Marinobacter nauticus (strain ATCC 700491 / DSM 11845 / VT8)</name>
    <name type="common">Marinobacter aquaeolei</name>
    <dbReference type="NCBI Taxonomy" id="351348"/>
    <lineage>
        <taxon>Bacteria</taxon>
        <taxon>Pseudomonadati</taxon>
        <taxon>Pseudomonadota</taxon>
        <taxon>Gammaproteobacteria</taxon>
        <taxon>Pseudomonadales</taxon>
        <taxon>Marinobacteraceae</taxon>
        <taxon>Marinobacter</taxon>
    </lineage>
</organism>
<gene>
    <name evidence="1" type="primary">obg</name>
    <name type="ordered locus">Maqu_0857</name>
</gene>
<reference key="1">
    <citation type="journal article" date="2011" name="Appl. Environ. Microbiol.">
        <title>Genomic potential of Marinobacter aquaeolei, a biogeochemical 'opportunitroph'.</title>
        <authorList>
            <person name="Singer E."/>
            <person name="Webb E.A."/>
            <person name="Nelson W.C."/>
            <person name="Heidelberg J.F."/>
            <person name="Ivanova N."/>
            <person name="Pati A."/>
            <person name="Edwards K.J."/>
        </authorList>
    </citation>
    <scope>NUCLEOTIDE SEQUENCE [LARGE SCALE GENOMIC DNA]</scope>
    <source>
        <strain>ATCC 700491 / DSM 11845 / VT8</strain>
    </source>
</reference>
<comment type="function">
    <text evidence="1">An essential GTPase which binds GTP, GDP and possibly (p)ppGpp with moderate affinity, with high nucleotide exchange rates and a fairly low GTP hydrolysis rate. Plays a role in control of the cell cycle, stress response, ribosome biogenesis and in those bacteria that undergo differentiation, in morphogenesis control.</text>
</comment>
<comment type="cofactor">
    <cofactor evidence="1">
        <name>Mg(2+)</name>
        <dbReference type="ChEBI" id="CHEBI:18420"/>
    </cofactor>
</comment>
<comment type="subunit">
    <text evidence="1">Monomer.</text>
</comment>
<comment type="subcellular location">
    <subcellularLocation>
        <location evidence="1">Cytoplasm</location>
    </subcellularLocation>
</comment>
<comment type="similarity">
    <text evidence="1">Belongs to the TRAFAC class OBG-HflX-like GTPase superfamily. OBG GTPase family.</text>
</comment>
<name>OBG_MARN8</name>
<accession>A1TYY4</accession>
<feature type="chain" id="PRO_0000386032" description="GTPase Obg">
    <location>
        <begin position="1"/>
        <end position="397"/>
    </location>
</feature>
<feature type="domain" description="Obg" evidence="2">
    <location>
        <begin position="1"/>
        <end position="159"/>
    </location>
</feature>
<feature type="domain" description="OBG-type G" evidence="1">
    <location>
        <begin position="160"/>
        <end position="333"/>
    </location>
</feature>
<feature type="region of interest" description="Disordered" evidence="3">
    <location>
        <begin position="128"/>
        <end position="148"/>
    </location>
</feature>
<feature type="region of interest" description="Disordered" evidence="3">
    <location>
        <begin position="336"/>
        <end position="397"/>
    </location>
</feature>
<feature type="compositionally biased region" description="Polar residues" evidence="3">
    <location>
        <begin position="129"/>
        <end position="144"/>
    </location>
</feature>
<feature type="compositionally biased region" description="Acidic residues" evidence="3">
    <location>
        <begin position="336"/>
        <end position="347"/>
    </location>
</feature>
<feature type="compositionally biased region" description="Basic and acidic residues" evidence="3">
    <location>
        <begin position="349"/>
        <end position="370"/>
    </location>
</feature>
<feature type="compositionally biased region" description="Acidic residues" evidence="3">
    <location>
        <begin position="378"/>
        <end position="390"/>
    </location>
</feature>
<feature type="binding site" evidence="1">
    <location>
        <begin position="166"/>
        <end position="173"/>
    </location>
    <ligand>
        <name>GTP</name>
        <dbReference type="ChEBI" id="CHEBI:37565"/>
    </ligand>
</feature>
<feature type="binding site" evidence="1">
    <location>
        <position position="173"/>
    </location>
    <ligand>
        <name>Mg(2+)</name>
        <dbReference type="ChEBI" id="CHEBI:18420"/>
    </ligand>
</feature>
<feature type="binding site" evidence="1">
    <location>
        <begin position="191"/>
        <end position="195"/>
    </location>
    <ligand>
        <name>GTP</name>
        <dbReference type="ChEBI" id="CHEBI:37565"/>
    </ligand>
</feature>
<feature type="binding site" evidence="1">
    <location>
        <position position="193"/>
    </location>
    <ligand>
        <name>Mg(2+)</name>
        <dbReference type="ChEBI" id="CHEBI:18420"/>
    </ligand>
</feature>
<feature type="binding site" evidence="1">
    <location>
        <begin position="213"/>
        <end position="216"/>
    </location>
    <ligand>
        <name>GTP</name>
        <dbReference type="ChEBI" id="CHEBI:37565"/>
    </ligand>
</feature>
<feature type="binding site" evidence="1">
    <location>
        <begin position="283"/>
        <end position="286"/>
    </location>
    <ligand>
        <name>GTP</name>
        <dbReference type="ChEBI" id="CHEBI:37565"/>
    </ligand>
</feature>
<feature type="binding site" evidence="1">
    <location>
        <begin position="314"/>
        <end position="316"/>
    </location>
    <ligand>
        <name>GTP</name>
        <dbReference type="ChEBI" id="CHEBI:37565"/>
    </ligand>
</feature>